<feature type="chain" id="PRO_1000001537" description="Recombination protein RecR">
    <location>
        <begin position="1"/>
        <end position="201"/>
    </location>
</feature>
<feature type="domain" description="Toprim" evidence="1">
    <location>
        <begin position="81"/>
        <end position="176"/>
    </location>
</feature>
<feature type="zinc finger region" description="C4-type" evidence="1">
    <location>
        <begin position="57"/>
        <end position="72"/>
    </location>
</feature>
<gene>
    <name evidence="1" type="primary">recR</name>
    <name type="ordered locus">ECP_0533</name>
</gene>
<organism>
    <name type="scientific">Escherichia coli O6:K15:H31 (strain 536 / UPEC)</name>
    <dbReference type="NCBI Taxonomy" id="362663"/>
    <lineage>
        <taxon>Bacteria</taxon>
        <taxon>Pseudomonadati</taxon>
        <taxon>Pseudomonadota</taxon>
        <taxon>Gammaproteobacteria</taxon>
        <taxon>Enterobacterales</taxon>
        <taxon>Enterobacteriaceae</taxon>
        <taxon>Escherichia</taxon>
    </lineage>
</organism>
<name>RECR_ECOL5</name>
<evidence type="ECO:0000255" key="1">
    <source>
        <dbReference type="HAMAP-Rule" id="MF_00017"/>
    </source>
</evidence>
<accession>Q0TKG9</accession>
<protein>
    <recommendedName>
        <fullName evidence="1">Recombination protein RecR</fullName>
    </recommendedName>
</protein>
<keyword id="KW-0227">DNA damage</keyword>
<keyword id="KW-0233">DNA recombination</keyword>
<keyword id="KW-0234">DNA repair</keyword>
<keyword id="KW-0479">Metal-binding</keyword>
<keyword id="KW-0862">Zinc</keyword>
<keyword id="KW-0863">Zinc-finger</keyword>
<dbReference type="EMBL" id="CP000247">
    <property type="protein sequence ID" value="ABG68562.1"/>
    <property type="molecule type" value="Genomic_DNA"/>
</dbReference>
<dbReference type="RefSeq" id="WP_001195030.1">
    <property type="nucleotide sequence ID" value="NC_008253.1"/>
</dbReference>
<dbReference type="SMR" id="Q0TKG9"/>
<dbReference type="KEGG" id="ecp:ECP_0533"/>
<dbReference type="HOGENOM" id="CLU_060739_1_2_6"/>
<dbReference type="Proteomes" id="UP000009182">
    <property type="component" value="Chromosome"/>
</dbReference>
<dbReference type="GO" id="GO:0003677">
    <property type="term" value="F:DNA binding"/>
    <property type="evidence" value="ECO:0007669"/>
    <property type="project" value="UniProtKB-UniRule"/>
</dbReference>
<dbReference type="GO" id="GO:0008270">
    <property type="term" value="F:zinc ion binding"/>
    <property type="evidence" value="ECO:0007669"/>
    <property type="project" value="UniProtKB-KW"/>
</dbReference>
<dbReference type="GO" id="GO:0006310">
    <property type="term" value="P:DNA recombination"/>
    <property type="evidence" value="ECO:0007669"/>
    <property type="project" value="UniProtKB-UniRule"/>
</dbReference>
<dbReference type="GO" id="GO:0006281">
    <property type="term" value="P:DNA repair"/>
    <property type="evidence" value="ECO:0007669"/>
    <property type="project" value="UniProtKB-UniRule"/>
</dbReference>
<dbReference type="CDD" id="cd01025">
    <property type="entry name" value="TOPRIM_recR"/>
    <property type="match status" value="1"/>
</dbReference>
<dbReference type="FunFam" id="1.10.8.420:FF:000001">
    <property type="entry name" value="Recombination protein RecR"/>
    <property type="match status" value="1"/>
</dbReference>
<dbReference type="FunFam" id="3.40.1360.10:FF:000001">
    <property type="entry name" value="Recombination protein RecR"/>
    <property type="match status" value="1"/>
</dbReference>
<dbReference type="Gene3D" id="3.40.1360.10">
    <property type="match status" value="1"/>
</dbReference>
<dbReference type="Gene3D" id="6.10.250.240">
    <property type="match status" value="1"/>
</dbReference>
<dbReference type="Gene3D" id="1.10.8.420">
    <property type="entry name" value="RecR Domain 1"/>
    <property type="match status" value="1"/>
</dbReference>
<dbReference type="HAMAP" id="MF_00017">
    <property type="entry name" value="RecR"/>
    <property type="match status" value="1"/>
</dbReference>
<dbReference type="InterPro" id="IPR000093">
    <property type="entry name" value="DNA_Rcmb_RecR"/>
</dbReference>
<dbReference type="InterPro" id="IPR023627">
    <property type="entry name" value="Rcmb_RecR"/>
</dbReference>
<dbReference type="InterPro" id="IPR015967">
    <property type="entry name" value="Rcmb_RecR_Znf"/>
</dbReference>
<dbReference type="InterPro" id="IPR006171">
    <property type="entry name" value="TOPRIM_dom"/>
</dbReference>
<dbReference type="InterPro" id="IPR034137">
    <property type="entry name" value="TOPRIM_RecR"/>
</dbReference>
<dbReference type="NCBIfam" id="TIGR00615">
    <property type="entry name" value="recR"/>
    <property type="match status" value="1"/>
</dbReference>
<dbReference type="PANTHER" id="PTHR30446">
    <property type="entry name" value="RECOMBINATION PROTEIN RECR"/>
    <property type="match status" value="1"/>
</dbReference>
<dbReference type="PANTHER" id="PTHR30446:SF0">
    <property type="entry name" value="RECOMBINATION PROTEIN RECR"/>
    <property type="match status" value="1"/>
</dbReference>
<dbReference type="Pfam" id="PF21175">
    <property type="entry name" value="RecR_C"/>
    <property type="match status" value="1"/>
</dbReference>
<dbReference type="Pfam" id="PF21176">
    <property type="entry name" value="RecR_HhH"/>
    <property type="match status" value="1"/>
</dbReference>
<dbReference type="Pfam" id="PF02132">
    <property type="entry name" value="RecR_ZnF"/>
    <property type="match status" value="1"/>
</dbReference>
<dbReference type="Pfam" id="PF13662">
    <property type="entry name" value="Toprim_4"/>
    <property type="match status" value="1"/>
</dbReference>
<dbReference type="SMART" id="SM00493">
    <property type="entry name" value="TOPRIM"/>
    <property type="match status" value="1"/>
</dbReference>
<dbReference type="SUPFAM" id="SSF111304">
    <property type="entry name" value="Recombination protein RecR"/>
    <property type="match status" value="1"/>
</dbReference>
<dbReference type="PROSITE" id="PS50880">
    <property type="entry name" value="TOPRIM"/>
    <property type="match status" value="1"/>
</dbReference>
<proteinExistence type="inferred from homology"/>
<comment type="function">
    <text evidence="1">May play a role in DNA repair. It seems to be involved in an RecBC-independent recombinational process of DNA repair. It may act with RecF and RecO.</text>
</comment>
<comment type="similarity">
    <text evidence="1">Belongs to the RecR family.</text>
</comment>
<reference key="1">
    <citation type="journal article" date="2006" name="Mol. Microbiol.">
        <title>Role of pathogenicity island-associated integrases in the genome plasticity of uropathogenic Escherichia coli strain 536.</title>
        <authorList>
            <person name="Hochhut B."/>
            <person name="Wilde C."/>
            <person name="Balling G."/>
            <person name="Middendorf B."/>
            <person name="Dobrindt U."/>
            <person name="Brzuszkiewicz E."/>
            <person name="Gottschalk G."/>
            <person name="Carniel E."/>
            <person name="Hacker J."/>
        </authorList>
    </citation>
    <scope>NUCLEOTIDE SEQUENCE [LARGE SCALE GENOMIC DNA]</scope>
    <source>
        <strain>536 / UPEC</strain>
    </source>
</reference>
<sequence>MQTSPLLTQLMEALRCLPGVGPKSAQRMAFTLLQRDRSGGMRLAQTLTRAMSEIGHCADCRTFTEQEVCNICSNPRRKENGQICVVESPADIYAIEQTGQFSGRYFVLMGHLSPLDGIGPDDIGLDRLEQRLAEEKITEVILATNPTVEGEATANYIAELCAQYDVEASRIAHGVPVGGELEMVDGTTLSHSLAGRHKIRF</sequence>